<organism>
    <name type="scientific">Yersinia pseudotuberculosis serotype O:3 (strain YPIII)</name>
    <dbReference type="NCBI Taxonomy" id="502800"/>
    <lineage>
        <taxon>Bacteria</taxon>
        <taxon>Pseudomonadati</taxon>
        <taxon>Pseudomonadota</taxon>
        <taxon>Gammaproteobacteria</taxon>
        <taxon>Enterobacterales</taxon>
        <taxon>Yersiniaceae</taxon>
        <taxon>Yersinia</taxon>
    </lineage>
</organism>
<accession>B1JKF2</accession>
<reference key="1">
    <citation type="submission" date="2008-02" db="EMBL/GenBank/DDBJ databases">
        <title>Complete sequence of Yersinia pseudotuberculosis YPIII.</title>
        <authorList>
            <consortium name="US DOE Joint Genome Institute"/>
            <person name="Copeland A."/>
            <person name="Lucas S."/>
            <person name="Lapidus A."/>
            <person name="Glavina del Rio T."/>
            <person name="Dalin E."/>
            <person name="Tice H."/>
            <person name="Bruce D."/>
            <person name="Goodwin L."/>
            <person name="Pitluck S."/>
            <person name="Munk A.C."/>
            <person name="Brettin T."/>
            <person name="Detter J.C."/>
            <person name="Han C."/>
            <person name="Tapia R."/>
            <person name="Schmutz J."/>
            <person name="Larimer F."/>
            <person name="Land M."/>
            <person name="Hauser L."/>
            <person name="Challacombe J.F."/>
            <person name="Green L."/>
            <person name="Lindler L.E."/>
            <person name="Nikolich M.P."/>
            <person name="Richardson P."/>
        </authorList>
    </citation>
    <scope>NUCLEOTIDE SEQUENCE [LARGE SCALE GENOMIC DNA]</scope>
    <source>
        <strain>YPIII</strain>
    </source>
</reference>
<dbReference type="EC" id="2.1.1.-" evidence="1"/>
<dbReference type="EMBL" id="CP000950">
    <property type="protein sequence ID" value="ACA66757.1"/>
    <property type="molecule type" value="Genomic_DNA"/>
</dbReference>
<dbReference type="RefSeq" id="WP_002220963.1">
    <property type="nucleotide sequence ID" value="NZ_CP009792.1"/>
</dbReference>
<dbReference type="SMR" id="B1JKF2"/>
<dbReference type="GeneID" id="57975080"/>
<dbReference type="KEGG" id="ypy:YPK_0454"/>
<dbReference type="PATRIC" id="fig|502800.11.peg.1062"/>
<dbReference type="GO" id="GO:0005829">
    <property type="term" value="C:cytosol"/>
    <property type="evidence" value="ECO:0007669"/>
    <property type="project" value="TreeGrafter"/>
</dbReference>
<dbReference type="GO" id="GO:0016279">
    <property type="term" value="F:protein-lysine N-methyltransferase activity"/>
    <property type="evidence" value="ECO:0007669"/>
    <property type="project" value="TreeGrafter"/>
</dbReference>
<dbReference type="GO" id="GO:0032259">
    <property type="term" value="P:methylation"/>
    <property type="evidence" value="ECO:0007669"/>
    <property type="project" value="UniProtKB-KW"/>
</dbReference>
<dbReference type="CDD" id="cd02440">
    <property type="entry name" value="AdoMet_MTases"/>
    <property type="match status" value="1"/>
</dbReference>
<dbReference type="Gene3D" id="3.40.50.150">
    <property type="entry name" value="Vaccinia Virus protein VP39"/>
    <property type="match status" value="1"/>
</dbReference>
<dbReference type="HAMAP" id="MF_00735">
    <property type="entry name" value="Methyltr_PrmA"/>
    <property type="match status" value="1"/>
</dbReference>
<dbReference type="InterPro" id="IPR050078">
    <property type="entry name" value="Ribosomal_L11_MeTrfase_PrmA"/>
</dbReference>
<dbReference type="InterPro" id="IPR004498">
    <property type="entry name" value="Ribosomal_PrmA_MeTrfase"/>
</dbReference>
<dbReference type="InterPro" id="IPR029063">
    <property type="entry name" value="SAM-dependent_MTases_sf"/>
</dbReference>
<dbReference type="NCBIfam" id="TIGR00406">
    <property type="entry name" value="prmA"/>
    <property type="match status" value="1"/>
</dbReference>
<dbReference type="PANTHER" id="PTHR43648">
    <property type="entry name" value="ELECTRON TRANSFER FLAVOPROTEIN BETA SUBUNIT LYSINE METHYLTRANSFERASE"/>
    <property type="match status" value="1"/>
</dbReference>
<dbReference type="PANTHER" id="PTHR43648:SF1">
    <property type="entry name" value="ELECTRON TRANSFER FLAVOPROTEIN BETA SUBUNIT LYSINE METHYLTRANSFERASE"/>
    <property type="match status" value="1"/>
</dbReference>
<dbReference type="Pfam" id="PF06325">
    <property type="entry name" value="PrmA"/>
    <property type="match status" value="1"/>
</dbReference>
<dbReference type="PIRSF" id="PIRSF000401">
    <property type="entry name" value="RPL11_MTase"/>
    <property type="match status" value="1"/>
</dbReference>
<dbReference type="SUPFAM" id="SSF53335">
    <property type="entry name" value="S-adenosyl-L-methionine-dependent methyltransferases"/>
    <property type="match status" value="1"/>
</dbReference>
<proteinExistence type="inferred from homology"/>
<protein>
    <recommendedName>
        <fullName evidence="1">Ribosomal protein L11 methyltransferase</fullName>
        <shortName evidence="1">L11 Mtase</shortName>
        <ecNumber evidence="1">2.1.1.-</ecNumber>
    </recommendedName>
</protein>
<name>PRMA_YERPY</name>
<keyword id="KW-0963">Cytoplasm</keyword>
<keyword id="KW-0489">Methyltransferase</keyword>
<keyword id="KW-0949">S-adenosyl-L-methionine</keyword>
<keyword id="KW-0808">Transferase</keyword>
<feature type="chain" id="PRO_1000132845" description="Ribosomal protein L11 methyltransferase">
    <location>
        <begin position="1"/>
        <end position="293"/>
    </location>
</feature>
<feature type="binding site" evidence="1">
    <location>
        <position position="145"/>
    </location>
    <ligand>
        <name>S-adenosyl-L-methionine</name>
        <dbReference type="ChEBI" id="CHEBI:59789"/>
    </ligand>
</feature>
<feature type="binding site" evidence="1">
    <location>
        <position position="166"/>
    </location>
    <ligand>
        <name>S-adenosyl-L-methionine</name>
        <dbReference type="ChEBI" id="CHEBI:59789"/>
    </ligand>
</feature>
<feature type="binding site" evidence="1">
    <location>
        <position position="188"/>
    </location>
    <ligand>
        <name>S-adenosyl-L-methionine</name>
        <dbReference type="ChEBI" id="CHEBI:59789"/>
    </ligand>
</feature>
<feature type="binding site" evidence="1">
    <location>
        <position position="230"/>
    </location>
    <ligand>
        <name>S-adenosyl-L-methionine</name>
        <dbReference type="ChEBI" id="CHEBI:59789"/>
    </ligand>
</feature>
<comment type="function">
    <text evidence="1">Methylates ribosomal protein L11.</text>
</comment>
<comment type="catalytic activity">
    <reaction evidence="1">
        <text>L-lysyl-[protein] + 3 S-adenosyl-L-methionine = N(6),N(6),N(6)-trimethyl-L-lysyl-[protein] + 3 S-adenosyl-L-homocysteine + 3 H(+)</text>
        <dbReference type="Rhea" id="RHEA:54192"/>
        <dbReference type="Rhea" id="RHEA-COMP:9752"/>
        <dbReference type="Rhea" id="RHEA-COMP:13826"/>
        <dbReference type="ChEBI" id="CHEBI:15378"/>
        <dbReference type="ChEBI" id="CHEBI:29969"/>
        <dbReference type="ChEBI" id="CHEBI:57856"/>
        <dbReference type="ChEBI" id="CHEBI:59789"/>
        <dbReference type="ChEBI" id="CHEBI:61961"/>
    </reaction>
</comment>
<comment type="subcellular location">
    <subcellularLocation>
        <location evidence="1">Cytoplasm</location>
    </subcellularLocation>
</comment>
<comment type="similarity">
    <text evidence="1">Belongs to the methyltransferase superfamily. PrmA family.</text>
</comment>
<evidence type="ECO:0000255" key="1">
    <source>
        <dbReference type="HAMAP-Rule" id="MF_00735"/>
    </source>
</evidence>
<sequence length="293" mass="31848">MPWIQLKLNTTGNQAESLGDVLVESGAVSVTFQDTHDNPVFEPLPGETRLWGDTDVIGLYDAETDMADVVAMLECHPQIGKGFIHKIEQLEDKDWEREWMDNFHPMRFGERLWICPSWRDVPDPTAVNVMLDPGLAFGTGTHPTTALCLQWLDSLDLNGKTLIDFGCGSGILAIAALKLGAARAIGIDIDPQAIQASRDNAQRNGVSERLELYLAKDQPAELSADVVVANILAGPLRELAPLISVLPTTGGHLGLSGVLATQAAGVAQAYEDKFILDPVAEKEEWCRITGIKK</sequence>
<gene>
    <name evidence="1" type="primary">prmA</name>
    <name type="ordered locus">YPK_0454</name>
</gene>